<feature type="chain" id="PRO_0000260221" description="Diphthamide biosynthesis protein 3">
    <location>
        <begin position="1"/>
        <end position="82"/>
    </location>
</feature>
<feature type="domain" description="DPH-type MB" evidence="3">
    <location>
        <begin position="4"/>
        <end position="60"/>
    </location>
</feature>
<feature type="binding site" evidence="2">
    <location>
        <position position="26"/>
    </location>
    <ligand>
        <name>Fe cation</name>
        <dbReference type="ChEBI" id="CHEBI:24875"/>
    </ligand>
</feature>
<feature type="binding site" evidence="2">
    <location>
        <position position="28"/>
    </location>
    <ligand>
        <name>Fe cation</name>
        <dbReference type="ChEBI" id="CHEBI:24875"/>
    </ligand>
</feature>
<feature type="binding site" evidence="2">
    <location>
        <position position="48"/>
    </location>
    <ligand>
        <name>Fe cation</name>
        <dbReference type="ChEBI" id="CHEBI:24875"/>
    </ligand>
</feature>
<feature type="binding site" evidence="2">
    <location>
        <position position="51"/>
    </location>
    <ligand>
        <name>Fe cation</name>
        <dbReference type="ChEBI" id="CHEBI:24875"/>
    </ligand>
</feature>
<evidence type="ECO:0000250" key="1">
    <source>
        <dbReference type="UniProtKB" id="Q3E840"/>
    </source>
</evidence>
<evidence type="ECO:0000250" key="2">
    <source>
        <dbReference type="UniProtKB" id="Q96FX2"/>
    </source>
</evidence>
<evidence type="ECO:0000255" key="3">
    <source>
        <dbReference type="PROSITE-ProRule" id="PRU00456"/>
    </source>
</evidence>
<evidence type="ECO:0000305" key="4"/>
<gene>
    <name type="primary">DPH3</name>
    <name type="synonym">ZCSL2</name>
    <name type="ORF">QtsA-20371</name>
</gene>
<protein>
    <recommendedName>
        <fullName evidence="4">Diphthamide biosynthesis protein 3</fullName>
    </recommendedName>
    <alternativeName>
        <fullName>CSL-type zinc finger-containing protein 2</fullName>
    </alternativeName>
</protein>
<organism>
    <name type="scientific">Macaca fascicularis</name>
    <name type="common">Crab-eating macaque</name>
    <name type="synonym">Cynomolgus monkey</name>
    <dbReference type="NCBI Taxonomy" id="9541"/>
    <lineage>
        <taxon>Eukaryota</taxon>
        <taxon>Metazoa</taxon>
        <taxon>Chordata</taxon>
        <taxon>Craniata</taxon>
        <taxon>Vertebrata</taxon>
        <taxon>Euteleostomi</taxon>
        <taxon>Mammalia</taxon>
        <taxon>Eutheria</taxon>
        <taxon>Euarchontoglires</taxon>
        <taxon>Primates</taxon>
        <taxon>Haplorrhini</taxon>
        <taxon>Catarrhini</taxon>
        <taxon>Cercopithecidae</taxon>
        <taxon>Cercopithecinae</taxon>
        <taxon>Macaca</taxon>
    </lineage>
</organism>
<name>DPH3_MACFA</name>
<dbReference type="EMBL" id="AB179456">
    <property type="protein sequence ID" value="BAE02507.1"/>
    <property type="molecule type" value="mRNA"/>
</dbReference>
<dbReference type="RefSeq" id="XP_005545755.1">
    <property type="nucleotide sequence ID" value="XM_005545698.4"/>
</dbReference>
<dbReference type="BMRB" id="Q4R312"/>
<dbReference type="SMR" id="Q4R312"/>
<dbReference type="STRING" id="9541.ENSMFAP00000023667"/>
<dbReference type="Ensembl" id="ENSMFAT00000031802.2">
    <property type="protein sequence ID" value="ENSMFAP00000023667.1"/>
    <property type="gene ID" value="ENSMFAG00000043479.2"/>
</dbReference>
<dbReference type="GeneID" id="101866524"/>
<dbReference type="KEGG" id="mcf:101866524"/>
<dbReference type="CTD" id="285381"/>
<dbReference type="VEuPathDB" id="HostDB:ENSMFAG00000043479"/>
<dbReference type="eggNOG" id="KOG2923">
    <property type="taxonomic scope" value="Eukaryota"/>
</dbReference>
<dbReference type="GeneTree" id="ENSGT00390000007225"/>
<dbReference type="OMA" id="IYDPDMF"/>
<dbReference type="UniPathway" id="UPA00559"/>
<dbReference type="Proteomes" id="UP000233100">
    <property type="component" value="Chromosome 2"/>
</dbReference>
<dbReference type="Bgee" id="ENSMFAG00000043479">
    <property type="expression patterns" value="Expressed in skeletal muscle tissue and 13 other cell types or tissues"/>
</dbReference>
<dbReference type="GO" id="GO:0005829">
    <property type="term" value="C:cytosol"/>
    <property type="evidence" value="ECO:0007669"/>
    <property type="project" value="Ensembl"/>
</dbReference>
<dbReference type="GO" id="GO:0005654">
    <property type="term" value="C:nucleoplasm"/>
    <property type="evidence" value="ECO:0007669"/>
    <property type="project" value="Ensembl"/>
</dbReference>
<dbReference type="GO" id="GO:0032991">
    <property type="term" value="C:protein-containing complex"/>
    <property type="evidence" value="ECO:0007669"/>
    <property type="project" value="Ensembl"/>
</dbReference>
<dbReference type="GO" id="GO:0008198">
    <property type="term" value="F:ferrous iron binding"/>
    <property type="evidence" value="ECO:0000250"/>
    <property type="project" value="UniProtKB"/>
</dbReference>
<dbReference type="GO" id="GO:0034986">
    <property type="term" value="F:iron chaperone activity"/>
    <property type="evidence" value="ECO:0000250"/>
    <property type="project" value="UniProtKB"/>
</dbReference>
<dbReference type="GO" id="GO:0050709">
    <property type="term" value="P:negative regulation of protein secretion"/>
    <property type="evidence" value="ECO:0007669"/>
    <property type="project" value="Ensembl"/>
</dbReference>
<dbReference type="GO" id="GO:0017183">
    <property type="term" value="P:protein histidyl modification to diphthamide"/>
    <property type="evidence" value="ECO:0000250"/>
    <property type="project" value="UniProtKB"/>
</dbReference>
<dbReference type="GO" id="GO:0002926">
    <property type="term" value="P:tRNA wobble base 5-methoxycarbonylmethyl-2-thiouridinylation"/>
    <property type="evidence" value="ECO:0000250"/>
    <property type="project" value="UniProtKB"/>
</dbReference>
<dbReference type="FunFam" id="3.10.660.10:FF:000001">
    <property type="entry name" value="Diphthamide biosynthesis 3"/>
    <property type="match status" value="1"/>
</dbReference>
<dbReference type="Gene3D" id="3.10.660.10">
    <property type="entry name" value="DPH Zinc finger"/>
    <property type="match status" value="1"/>
</dbReference>
<dbReference type="InterPro" id="IPR044248">
    <property type="entry name" value="DPH3/4-like"/>
</dbReference>
<dbReference type="InterPro" id="IPR007872">
    <property type="entry name" value="DPH_MB_dom"/>
</dbReference>
<dbReference type="InterPro" id="IPR036671">
    <property type="entry name" value="DPH_MB_sf"/>
</dbReference>
<dbReference type="PANTHER" id="PTHR21454:SF31">
    <property type="entry name" value="DIPHTHAMIDE BIOSYNTHESIS PROTEIN 3"/>
    <property type="match status" value="1"/>
</dbReference>
<dbReference type="PANTHER" id="PTHR21454">
    <property type="entry name" value="DPH3 HOMOLOG-RELATED"/>
    <property type="match status" value="1"/>
</dbReference>
<dbReference type="Pfam" id="PF05207">
    <property type="entry name" value="Zn_ribbon_CSL"/>
    <property type="match status" value="1"/>
</dbReference>
<dbReference type="SUPFAM" id="SSF144217">
    <property type="entry name" value="CSL zinc finger"/>
    <property type="match status" value="1"/>
</dbReference>
<dbReference type="PROSITE" id="PS51074">
    <property type="entry name" value="DPH_MB"/>
    <property type="match status" value="1"/>
</dbReference>
<sequence>MAVFHDEVEIEDFQYDEDSETYFYPCPCGDNFSITKEDLENGEDVATCPSCSLIIKVIYDKDQFVCGETVPAPSANKELVKC</sequence>
<proteinExistence type="inferred from homology"/>
<keyword id="KW-0963">Cytoplasm</keyword>
<keyword id="KW-0408">Iron</keyword>
<keyword id="KW-0479">Metal-binding</keyword>
<keyword id="KW-0539">Nucleus</keyword>
<keyword id="KW-1185">Reference proteome</keyword>
<comment type="function">
    <text evidence="1">Required for the first step of diphthamide biosynthesis, a post-translational modification of histidine which occurs in elongation factor 2. DPH1 and DPH2 transfer a 3-amino-3-carboxypropyl (ACP) group from S-adenosyl-L-methionine (SAM) to a histidine residue, the reaction is assisted by a reduction system comprising DPH3 and a NADH-dependent reductase. Acts as an electron donor to reduce the Fe-S cluster in DPH1-DPH2 keeping the [4Fe-4S] clusters in the active and reduced state. Restores iron to DPH1-DPH2 iron-sulfur clusters which have degraded from [4Fe-4S] to [3Fe-4S] by donating an iron atom to reform [4Fe-4S] clusters, in a manner dependent on the presence of elongation factor 2 and SAM. Associates with the elongator complex and is required for tRNA Wobble base modifications mediated by the elongator complex. The elongator complex is required for multiple tRNA modifications, including mcm5U (5-methoxycarbonylmethyl uridine), mcm5s 2U (5-methoxycarbonylmethyl-2-thiouridine), and ncm5U (5-carbamoylmethyl uridine).</text>
</comment>
<comment type="catalytic activity">
    <reaction evidence="1">
        <text>[3Fe-4S](1+)-[protein] + Fe(2+)-[Dph3] = [3Fe-4S](0)-[protein] + Fe(3+)-[Dph3]</text>
        <dbReference type="Rhea" id="RHEA:71235"/>
        <dbReference type="Rhea" id="RHEA-COMP:17996"/>
        <dbReference type="Rhea" id="RHEA-COMP:17997"/>
        <dbReference type="Rhea" id="RHEA-COMP:18002"/>
        <dbReference type="Rhea" id="RHEA-COMP:18003"/>
        <dbReference type="ChEBI" id="CHEBI:29033"/>
        <dbReference type="ChEBI" id="CHEBI:29034"/>
        <dbReference type="ChEBI" id="CHEBI:33751"/>
        <dbReference type="ChEBI" id="CHEBI:47402"/>
        <dbReference type="ChEBI" id="CHEBI:83228"/>
    </reaction>
</comment>
<comment type="catalytic activity">
    <reaction evidence="1">
        <text>2 [3Fe-4S](0)-[protein] + 2 Fe(2+)-[Dph3] + NADH = 2 [4Fe-4S](1+)-[protein] + 2 [Dph3] + NAD(+) + H(+)</text>
        <dbReference type="Rhea" id="RHEA:71239"/>
        <dbReference type="Rhea" id="RHEA-COMP:17997"/>
        <dbReference type="Rhea" id="RHEA-COMP:17998"/>
        <dbReference type="Rhea" id="RHEA-COMP:18001"/>
        <dbReference type="Rhea" id="RHEA-COMP:18002"/>
        <dbReference type="ChEBI" id="CHEBI:15378"/>
        <dbReference type="ChEBI" id="CHEBI:29033"/>
        <dbReference type="ChEBI" id="CHEBI:33723"/>
        <dbReference type="ChEBI" id="CHEBI:47402"/>
        <dbReference type="ChEBI" id="CHEBI:57540"/>
        <dbReference type="ChEBI" id="CHEBI:57945"/>
        <dbReference type="ChEBI" id="CHEBI:83228"/>
    </reaction>
</comment>
<comment type="cofactor">
    <cofactor evidence="1">
        <name>Fe(2+)</name>
        <dbReference type="ChEBI" id="CHEBI:29033"/>
    </cofactor>
</comment>
<comment type="pathway">
    <text evidence="4">Protein modification; peptidyl-diphthamide biosynthesis.</text>
</comment>
<comment type="subunit">
    <text evidence="1 2">Component of the 2-(3-amino-3-carboxypropyl)histidine synthase complex composed of DPH1, DPH2, DPH3 and a NADH-dependent reductase (By similarity). Interacts with SERGEF (By similarity).</text>
</comment>
<comment type="subcellular location">
    <subcellularLocation>
        <location evidence="2">Cytoplasm</location>
    </subcellularLocation>
    <subcellularLocation>
        <location evidence="2">Nucleus</location>
    </subcellularLocation>
</comment>
<comment type="domain">
    <text evidence="1">The DPH-type metal-binding (MB) domain can also bind zinc. However, iron is the physiological binding partner as zinc binding impairs the protein electron donor function.</text>
</comment>
<comment type="similarity">
    <text evidence="4">Belongs to the DPH3 family.</text>
</comment>
<accession>Q4R312</accession>
<reference key="1">
    <citation type="submission" date="2005-06" db="EMBL/GenBank/DDBJ databases">
        <title>DNA sequences of macaque genes expressed in brain or testis and its evolutionary implications.</title>
        <authorList>
            <consortium name="International consortium for macaque cDNA sequencing and analysis"/>
        </authorList>
    </citation>
    <scope>NUCLEOTIDE SEQUENCE [LARGE SCALE MRNA]</scope>
    <source>
        <tissue>Testis</tissue>
    </source>
</reference>